<accession>P9WKA3</accession>
<accession>L0T7U3</accession>
<accession>P67204</accession>
<accession>Q10554</accession>
<evidence type="ECO:0000250" key="1">
    <source>
        <dbReference type="UniProtKB" id="P9WKC9"/>
    </source>
</evidence>
<evidence type="ECO:0000255" key="2"/>
<evidence type="ECO:0000269" key="3">
    <source>
    </source>
</evidence>
<evidence type="ECO:0000305" key="4"/>
<sequence>MRQQQEADVVALGRKPGLLCVPERFRAMDLPMAAADALFLWAETPTRPLHVGALAVLSQPDNGTGRYLRKVFSAAVARQQVAPWWRRRPHRSLTSLGQWSWRTETEVDLDYHVRLSALPPRAGTAELWALVSELHAGMLDRSRPLWQVDLIEGLPGGRCAVYVKVHHALADGVSVMRLLQRIVTADPHQRQMPTLWEVPAQASVAKHTAPRGSSRPLTLAKGVLGQARGVPGMVRVVADTTWRAAQCRSGPLTLAAPHTPLNEPIAGARSVAGCSFPIERLRQVAEHADATINDVVLAMCGGALRAYLISRGALPGAPLIAMVPVSLRDTAVIDVFGQGPGNKIGTLMCSLATHLASPVERLSAIRASMRDGKAAIAGRSRNQALAMSALGAAPLALAMALGRVPAPLRPPNVTISNVPGPQGALYWNGARLDALYLLSAPVDGAALNITCSGTNEQITFGLTGCRRAVPALSILTDQLAHELELLVGVSEAGPGTRLRRIAGRR</sequence>
<protein>
    <recommendedName>
        <fullName>Putative diacyglycerol O-acyltransferase Rv0895</fullName>
        <ecNumber evidence="1">2.3.1.20</ecNumber>
    </recommendedName>
    <alternativeName>
        <fullName>Putative triacylglycerol synthase Rv0895</fullName>
    </alternativeName>
</protein>
<gene>
    <name type="ordered locus">Rv0895</name>
    <name type="ORF">MTCY31.23</name>
</gene>
<comment type="function">
    <text evidence="3">Upon expression in E.coli functions very weakly as a triacylglycerol synthase, making triacylglycerol (TG) from diolein and long-chain fatty acyl-CoA. Has no wax synthase activity.</text>
</comment>
<comment type="catalytic activity">
    <reaction evidence="1">
        <text>an acyl-CoA + a 1,2-diacyl-sn-glycerol = a triacyl-sn-glycerol + CoA</text>
        <dbReference type="Rhea" id="RHEA:10868"/>
        <dbReference type="ChEBI" id="CHEBI:17815"/>
        <dbReference type="ChEBI" id="CHEBI:57287"/>
        <dbReference type="ChEBI" id="CHEBI:58342"/>
        <dbReference type="ChEBI" id="CHEBI:64615"/>
        <dbReference type="EC" id="2.3.1.20"/>
    </reaction>
</comment>
<comment type="pathway">
    <text>Glycerolipid metabolism; triacylglycerol biosynthesis.</text>
</comment>
<comment type="induction">
    <text evidence="3">Induced in response to low levels of nitric oxide (NO).</text>
</comment>
<comment type="similarity">
    <text evidence="4">Belongs to the long-chain O-acyltransferase family.</text>
</comment>
<dbReference type="EC" id="2.3.1.20" evidence="1"/>
<dbReference type="EMBL" id="AL123456">
    <property type="protein sequence ID" value="CCP43643.1"/>
    <property type="molecule type" value="Genomic_DNA"/>
</dbReference>
<dbReference type="PIR" id="D70782">
    <property type="entry name" value="D70782"/>
</dbReference>
<dbReference type="RefSeq" id="NP_215410.1">
    <property type="nucleotide sequence ID" value="NC_000962.3"/>
</dbReference>
<dbReference type="RefSeq" id="WP_003404663.1">
    <property type="nucleotide sequence ID" value="NC_000962.3"/>
</dbReference>
<dbReference type="SMR" id="P9WKA3"/>
<dbReference type="STRING" id="83332.Rv0895"/>
<dbReference type="PaxDb" id="83332-Rv0895"/>
<dbReference type="DNASU" id="885481"/>
<dbReference type="GeneID" id="885481"/>
<dbReference type="KEGG" id="mtu:Rv0895"/>
<dbReference type="KEGG" id="mtv:RVBD_0895"/>
<dbReference type="TubercuList" id="Rv0895"/>
<dbReference type="eggNOG" id="COG1020">
    <property type="taxonomic scope" value="Bacteria"/>
</dbReference>
<dbReference type="InParanoid" id="P9WKA3"/>
<dbReference type="OrthoDB" id="9810950at2"/>
<dbReference type="PhylomeDB" id="P9WKA3"/>
<dbReference type="UniPathway" id="UPA00282"/>
<dbReference type="Proteomes" id="UP000001584">
    <property type="component" value="Chromosome"/>
</dbReference>
<dbReference type="GO" id="GO:0009274">
    <property type="term" value="C:peptidoglycan-based cell wall"/>
    <property type="evidence" value="ECO:0007005"/>
    <property type="project" value="MTBBASE"/>
</dbReference>
<dbReference type="GO" id="GO:0005886">
    <property type="term" value="C:plasma membrane"/>
    <property type="evidence" value="ECO:0000318"/>
    <property type="project" value="GO_Central"/>
</dbReference>
<dbReference type="GO" id="GO:0004144">
    <property type="term" value="F:diacylglycerol O-acyltransferase activity"/>
    <property type="evidence" value="ECO:0007669"/>
    <property type="project" value="UniProtKB-EC"/>
</dbReference>
<dbReference type="GO" id="GO:0008374">
    <property type="term" value="F:O-acyltransferase activity"/>
    <property type="evidence" value="ECO:0000318"/>
    <property type="project" value="GO_Central"/>
</dbReference>
<dbReference type="GO" id="GO:0051701">
    <property type="term" value="P:biological process involved in interaction with host"/>
    <property type="evidence" value="ECO:0000318"/>
    <property type="project" value="GO_Central"/>
</dbReference>
<dbReference type="GO" id="GO:0006071">
    <property type="term" value="P:glycerol metabolic process"/>
    <property type="evidence" value="ECO:0007669"/>
    <property type="project" value="UniProtKB-KW"/>
</dbReference>
<dbReference type="GO" id="GO:0001666">
    <property type="term" value="P:response to hypoxia"/>
    <property type="evidence" value="ECO:0000318"/>
    <property type="project" value="GO_Central"/>
</dbReference>
<dbReference type="GO" id="GO:0071731">
    <property type="term" value="P:response to nitric oxide"/>
    <property type="evidence" value="ECO:0000318"/>
    <property type="project" value="GO_Central"/>
</dbReference>
<dbReference type="GO" id="GO:0019432">
    <property type="term" value="P:triglyceride biosynthetic process"/>
    <property type="evidence" value="ECO:0000318"/>
    <property type="project" value="GO_Central"/>
</dbReference>
<dbReference type="Gene3D" id="3.30.559.10">
    <property type="entry name" value="Chloramphenicol acetyltransferase-like domain"/>
    <property type="match status" value="1"/>
</dbReference>
<dbReference type="InterPro" id="IPR014292">
    <property type="entry name" value="Acyl_transf_WS/DGAT"/>
</dbReference>
<dbReference type="InterPro" id="IPR023213">
    <property type="entry name" value="CAT-like_dom_sf"/>
</dbReference>
<dbReference type="InterPro" id="IPR045034">
    <property type="entry name" value="O-acyltransferase_WSD1-like"/>
</dbReference>
<dbReference type="InterPro" id="IPR009721">
    <property type="entry name" value="O-acyltransferase_WSD1_C"/>
</dbReference>
<dbReference type="InterPro" id="IPR004255">
    <property type="entry name" value="O-acyltransferase_WSD1_N"/>
</dbReference>
<dbReference type="NCBIfam" id="TIGR02946">
    <property type="entry name" value="acyl_WS_DGAT"/>
    <property type="match status" value="1"/>
</dbReference>
<dbReference type="PANTHER" id="PTHR31650">
    <property type="entry name" value="O-ACYLTRANSFERASE (WSD1-LIKE) FAMILY PROTEIN"/>
    <property type="match status" value="1"/>
</dbReference>
<dbReference type="PANTHER" id="PTHR31650:SF1">
    <property type="entry name" value="WAX ESTER SYNTHASE_DIACYLGLYCEROL ACYLTRANSFERASE 4-RELATED"/>
    <property type="match status" value="1"/>
</dbReference>
<dbReference type="Pfam" id="PF06974">
    <property type="entry name" value="WS_DGAT_C"/>
    <property type="match status" value="1"/>
</dbReference>
<dbReference type="Pfam" id="PF03007">
    <property type="entry name" value="WS_DGAT_cat"/>
    <property type="match status" value="1"/>
</dbReference>
<dbReference type="SUPFAM" id="SSF52777">
    <property type="entry name" value="CoA-dependent acyltransferases"/>
    <property type="match status" value="2"/>
</dbReference>
<reference key="1">
    <citation type="journal article" date="1998" name="Nature">
        <title>Deciphering the biology of Mycobacterium tuberculosis from the complete genome sequence.</title>
        <authorList>
            <person name="Cole S.T."/>
            <person name="Brosch R."/>
            <person name="Parkhill J."/>
            <person name="Garnier T."/>
            <person name="Churcher C.M."/>
            <person name="Harris D.E."/>
            <person name="Gordon S.V."/>
            <person name="Eiglmeier K."/>
            <person name="Gas S."/>
            <person name="Barry C.E. III"/>
            <person name="Tekaia F."/>
            <person name="Badcock K."/>
            <person name="Basham D."/>
            <person name="Brown D."/>
            <person name="Chillingworth T."/>
            <person name="Connor R."/>
            <person name="Davies R.M."/>
            <person name="Devlin K."/>
            <person name="Feltwell T."/>
            <person name="Gentles S."/>
            <person name="Hamlin N."/>
            <person name="Holroyd S."/>
            <person name="Hornsby T."/>
            <person name="Jagels K."/>
            <person name="Krogh A."/>
            <person name="McLean J."/>
            <person name="Moule S."/>
            <person name="Murphy L.D."/>
            <person name="Oliver S."/>
            <person name="Osborne J."/>
            <person name="Quail M.A."/>
            <person name="Rajandream M.A."/>
            <person name="Rogers J."/>
            <person name="Rutter S."/>
            <person name="Seeger K."/>
            <person name="Skelton S."/>
            <person name="Squares S."/>
            <person name="Squares R."/>
            <person name="Sulston J.E."/>
            <person name="Taylor K."/>
            <person name="Whitehead S."/>
            <person name="Barrell B.G."/>
        </authorList>
    </citation>
    <scope>NUCLEOTIDE SEQUENCE [LARGE SCALE GENOMIC DNA]</scope>
    <source>
        <strain>ATCC 25618 / H37Rv</strain>
    </source>
</reference>
<reference key="2">
    <citation type="journal article" date="2004" name="J. Bacteriol.">
        <title>Induction of a novel class of diacylglycerol acyltransferases and triacylglycerol accumulation in Mycobacterium tuberculosis as it goes into a dormancy-like state in culture.</title>
        <authorList>
            <person name="Daniel J."/>
            <person name="Deb C."/>
            <person name="Dubey V.S."/>
            <person name="Sirakova T.D."/>
            <person name="Abomoelak B."/>
            <person name="Morbidoni H.R."/>
            <person name="Kolattukudy P.E."/>
        </authorList>
    </citation>
    <scope>EXPRESSION IN E.COLI</scope>
    <scope>INDUCTION BY NITRIC OXIDE (NO)</scope>
    <source>
        <strain>ATCC 25618 / H37Rv</strain>
    </source>
</reference>
<name>Y895_MYCTU</name>
<feature type="chain" id="PRO_0000222906" description="Putative diacyglycerol O-acyltransferase Rv0895">
    <location>
        <begin position="1"/>
        <end position="505"/>
    </location>
</feature>
<feature type="active site" description="Proton acceptor" evidence="2">
    <location>
        <position position="167"/>
    </location>
</feature>
<organism>
    <name type="scientific">Mycobacterium tuberculosis (strain ATCC 25618 / H37Rv)</name>
    <dbReference type="NCBI Taxonomy" id="83332"/>
    <lineage>
        <taxon>Bacteria</taxon>
        <taxon>Bacillati</taxon>
        <taxon>Actinomycetota</taxon>
        <taxon>Actinomycetes</taxon>
        <taxon>Mycobacteriales</taxon>
        <taxon>Mycobacteriaceae</taxon>
        <taxon>Mycobacterium</taxon>
        <taxon>Mycobacterium tuberculosis complex</taxon>
    </lineage>
</organism>
<proteinExistence type="evidence at transcript level"/>
<keyword id="KW-0012">Acyltransferase</keyword>
<keyword id="KW-0319">Glycerol metabolism</keyword>
<keyword id="KW-0444">Lipid biosynthesis</keyword>
<keyword id="KW-0443">Lipid metabolism</keyword>
<keyword id="KW-1185">Reference proteome</keyword>
<keyword id="KW-0808">Transferase</keyword>